<dbReference type="EMBL" id="X98350">
    <property type="protein sequence ID" value="CAA66995.1"/>
    <property type="molecule type" value="mRNA"/>
</dbReference>
<dbReference type="SMR" id="O09232"/>
<dbReference type="GO" id="GO:0072562">
    <property type="term" value="C:blood microparticle"/>
    <property type="evidence" value="ECO:0007669"/>
    <property type="project" value="TreeGrafter"/>
</dbReference>
<dbReference type="GO" id="GO:0031838">
    <property type="term" value="C:haptoglobin-hemoglobin complex"/>
    <property type="evidence" value="ECO:0007669"/>
    <property type="project" value="TreeGrafter"/>
</dbReference>
<dbReference type="GO" id="GO:0005833">
    <property type="term" value="C:hemoglobin complex"/>
    <property type="evidence" value="ECO:0007669"/>
    <property type="project" value="InterPro"/>
</dbReference>
<dbReference type="GO" id="GO:0031720">
    <property type="term" value="F:haptoglobin binding"/>
    <property type="evidence" value="ECO:0007669"/>
    <property type="project" value="TreeGrafter"/>
</dbReference>
<dbReference type="GO" id="GO:0020037">
    <property type="term" value="F:heme binding"/>
    <property type="evidence" value="ECO:0007669"/>
    <property type="project" value="InterPro"/>
</dbReference>
<dbReference type="GO" id="GO:0046872">
    <property type="term" value="F:metal ion binding"/>
    <property type="evidence" value="ECO:0007669"/>
    <property type="project" value="UniProtKB-KW"/>
</dbReference>
<dbReference type="GO" id="GO:0043177">
    <property type="term" value="F:organic acid binding"/>
    <property type="evidence" value="ECO:0007669"/>
    <property type="project" value="TreeGrafter"/>
</dbReference>
<dbReference type="GO" id="GO:0019825">
    <property type="term" value="F:oxygen binding"/>
    <property type="evidence" value="ECO:0007669"/>
    <property type="project" value="InterPro"/>
</dbReference>
<dbReference type="GO" id="GO:0005344">
    <property type="term" value="F:oxygen carrier activity"/>
    <property type="evidence" value="ECO:0007669"/>
    <property type="project" value="UniProtKB-KW"/>
</dbReference>
<dbReference type="GO" id="GO:0004601">
    <property type="term" value="F:peroxidase activity"/>
    <property type="evidence" value="ECO:0007669"/>
    <property type="project" value="TreeGrafter"/>
</dbReference>
<dbReference type="GO" id="GO:0042744">
    <property type="term" value="P:hydrogen peroxide catabolic process"/>
    <property type="evidence" value="ECO:0007669"/>
    <property type="project" value="TreeGrafter"/>
</dbReference>
<dbReference type="CDD" id="cd08925">
    <property type="entry name" value="Hb-beta-like"/>
    <property type="match status" value="1"/>
</dbReference>
<dbReference type="FunFam" id="1.10.490.10:FF:000001">
    <property type="entry name" value="Hemoglobin subunit beta"/>
    <property type="match status" value="1"/>
</dbReference>
<dbReference type="Gene3D" id="1.10.490.10">
    <property type="entry name" value="Globins"/>
    <property type="match status" value="1"/>
</dbReference>
<dbReference type="InterPro" id="IPR000971">
    <property type="entry name" value="Globin"/>
</dbReference>
<dbReference type="InterPro" id="IPR009050">
    <property type="entry name" value="Globin-like_sf"/>
</dbReference>
<dbReference type="InterPro" id="IPR012292">
    <property type="entry name" value="Globin/Proto"/>
</dbReference>
<dbReference type="InterPro" id="IPR002337">
    <property type="entry name" value="Hemoglobin_b"/>
</dbReference>
<dbReference type="InterPro" id="IPR050056">
    <property type="entry name" value="Hemoglobin_oxygen_transport"/>
</dbReference>
<dbReference type="PANTHER" id="PTHR11442">
    <property type="entry name" value="HEMOGLOBIN FAMILY MEMBER"/>
    <property type="match status" value="1"/>
</dbReference>
<dbReference type="PANTHER" id="PTHR11442:SF7">
    <property type="entry name" value="HEMOGLOBIN SUBUNIT EPSILON"/>
    <property type="match status" value="1"/>
</dbReference>
<dbReference type="Pfam" id="PF00042">
    <property type="entry name" value="Globin"/>
    <property type="match status" value="1"/>
</dbReference>
<dbReference type="PRINTS" id="PR00814">
    <property type="entry name" value="BETAHAEM"/>
</dbReference>
<dbReference type="SUPFAM" id="SSF46458">
    <property type="entry name" value="Globin-like"/>
    <property type="match status" value="1"/>
</dbReference>
<dbReference type="PROSITE" id="PS01033">
    <property type="entry name" value="GLOBIN"/>
    <property type="match status" value="1"/>
</dbReference>
<gene>
    <name type="primary">hbb</name>
</gene>
<keyword id="KW-0349">Heme</keyword>
<keyword id="KW-0408">Iron</keyword>
<keyword id="KW-0479">Metal-binding</keyword>
<keyword id="KW-0561">Oxygen transport</keyword>
<keyword id="KW-0813">Transport</keyword>
<organism>
    <name type="scientific">Melanogrammus aeglefinus</name>
    <name type="common">Haddock</name>
    <name type="synonym">Gadus aeglefinus</name>
    <dbReference type="NCBI Taxonomy" id="8056"/>
    <lineage>
        <taxon>Eukaryota</taxon>
        <taxon>Metazoa</taxon>
        <taxon>Chordata</taxon>
        <taxon>Craniata</taxon>
        <taxon>Vertebrata</taxon>
        <taxon>Euteleostomi</taxon>
        <taxon>Actinopterygii</taxon>
        <taxon>Neopterygii</taxon>
        <taxon>Teleostei</taxon>
        <taxon>Neoteleostei</taxon>
        <taxon>Acanthomorphata</taxon>
        <taxon>Zeiogadaria</taxon>
        <taxon>Gadariae</taxon>
        <taxon>Gadiformes</taxon>
        <taxon>Gadoidei</taxon>
        <taxon>Gadidae</taxon>
        <taxon>Melanogrammus</taxon>
    </lineage>
</organism>
<accession>O09232</accession>
<feature type="initiator methionine" description="Removed">
    <location>
        <position position="1"/>
    </location>
</feature>
<feature type="chain" id="PRO_0000053012" description="Hemoglobin subunit beta">
    <location>
        <begin position="2"/>
        <end position="147"/>
    </location>
</feature>
<feature type="domain" description="Globin" evidence="1">
    <location>
        <begin position="3"/>
        <end position="147"/>
    </location>
</feature>
<feature type="binding site" description="distal binding residue">
    <location>
        <position position="64"/>
    </location>
    <ligand>
        <name>heme b</name>
        <dbReference type="ChEBI" id="CHEBI:60344"/>
    </ligand>
    <ligandPart>
        <name>Fe</name>
        <dbReference type="ChEBI" id="CHEBI:18248"/>
    </ligandPart>
</feature>
<feature type="binding site" description="proximal binding residue">
    <location>
        <position position="93"/>
    </location>
    <ligand>
        <name>heme b</name>
        <dbReference type="ChEBI" id="CHEBI:60344"/>
    </ligand>
    <ligandPart>
        <name>Fe</name>
        <dbReference type="ChEBI" id="CHEBI:18248"/>
    </ligandPart>
</feature>
<protein>
    <recommendedName>
        <fullName>Hemoglobin subunit beta</fullName>
    </recommendedName>
    <alternativeName>
        <fullName>Beta-globin</fullName>
    </alternativeName>
    <alternativeName>
        <fullName>Hemoglobin beta chain</fullName>
    </alternativeName>
</protein>
<comment type="function">
    <text>Involved in oxygen transport from gills to the various peripheral tissues.</text>
</comment>
<comment type="subunit">
    <text>Heterotetramer of two alpha chains and two beta chains.</text>
</comment>
<comment type="tissue specificity">
    <text>Red blood cells.</text>
</comment>
<comment type="similarity">
    <text evidence="1">Belongs to the globin family.</text>
</comment>
<evidence type="ECO:0000255" key="1">
    <source>
        <dbReference type="PROSITE-ProRule" id="PRU00238"/>
    </source>
</evidence>
<name>HBB_MELAE</name>
<reference key="1">
    <citation type="submission" date="1996-06" db="EMBL/GenBank/DDBJ databases">
        <authorList>
            <person name="Tipping D.R."/>
            <person name="Birley A.J."/>
        </authorList>
    </citation>
    <scope>NUCLEOTIDE SEQUENCE [MRNA]</scope>
    <source>
        <tissue>Blood</tissue>
    </source>
</reference>
<sequence length="147" mass="16591">MVEWTDDERAIINGIFSNLDYEEIGRKSLCRCLIVYPWTQRYFGGFGNLYNAETILCNPLIAAHGTKILHGLDRALKNMDDIKNTYAELSLLHSDKLHVDPDNFRLLADCLTVVIAAKMGAAFTVDTQVAWQKFLAVVVSALGRQYH</sequence>
<proteinExistence type="evidence at transcript level"/>